<feature type="chain" id="PRO_1000166664" description="NADH-quinone oxidoreductase subunit B">
    <location>
        <begin position="1"/>
        <end position="220"/>
    </location>
</feature>
<feature type="binding site" evidence="1">
    <location>
        <position position="63"/>
    </location>
    <ligand>
        <name>[4Fe-4S] cluster</name>
        <dbReference type="ChEBI" id="CHEBI:49883"/>
    </ligand>
</feature>
<feature type="binding site" evidence="1">
    <location>
        <position position="64"/>
    </location>
    <ligand>
        <name>[4Fe-4S] cluster</name>
        <dbReference type="ChEBI" id="CHEBI:49883"/>
    </ligand>
</feature>
<feature type="binding site" evidence="1">
    <location>
        <position position="129"/>
    </location>
    <ligand>
        <name>[4Fe-4S] cluster</name>
        <dbReference type="ChEBI" id="CHEBI:49883"/>
    </ligand>
</feature>
<feature type="binding site" evidence="1">
    <location>
        <position position="158"/>
    </location>
    <ligand>
        <name>[4Fe-4S] cluster</name>
        <dbReference type="ChEBI" id="CHEBI:49883"/>
    </ligand>
</feature>
<sequence length="220" mass="25089">MDYTLTRIDPNGENDRYPLQKQEIVTDPLEQEVNKNVFMGKLHDMVNWGRKNSIWPYNFGLSCCYVEMVTSFTAVHDVARFGAEVLRASPRQADLMVVAGTCFTKMAPVIQRLYDQMLEPKWVISMGACANSGGMYDIYSVVQGVDKFIPVDVYIPGCPPRPEAYMQALMLLQESIGKERRPLSWVVGDQGVYRANMQPERERKRGERIAVTNLRTPDEI</sequence>
<evidence type="ECO:0000255" key="1">
    <source>
        <dbReference type="HAMAP-Rule" id="MF_01356"/>
    </source>
</evidence>
<gene>
    <name evidence="1" type="primary">nuoB</name>
    <name type="ordered locus">SPC_1382</name>
</gene>
<dbReference type="EC" id="7.1.1.-" evidence="1"/>
<dbReference type="EMBL" id="CP000857">
    <property type="protein sequence ID" value="ACN45544.1"/>
    <property type="molecule type" value="Genomic_DNA"/>
</dbReference>
<dbReference type="RefSeq" id="WP_000386728.1">
    <property type="nucleotide sequence ID" value="NC_012125.1"/>
</dbReference>
<dbReference type="SMR" id="C0Q040"/>
<dbReference type="KEGG" id="sei:SPC_1382"/>
<dbReference type="HOGENOM" id="CLU_055737_7_3_6"/>
<dbReference type="Proteomes" id="UP000001599">
    <property type="component" value="Chromosome"/>
</dbReference>
<dbReference type="GO" id="GO:0005886">
    <property type="term" value="C:plasma membrane"/>
    <property type="evidence" value="ECO:0007669"/>
    <property type="project" value="UniProtKB-SubCell"/>
</dbReference>
<dbReference type="GO" id="GO:0045271">
    <property type="term" value="C:respiratory chain complex I"/>
    <property type="evidence" value="ECO:0007669"/>
    <property type="project" value="TreeGrafter"/>
</dbReference>
<dbReference type="GO" id="GO:0051539">
    <property type="term" value="F:4 iron, 4 sulfur cluster binding"/>
    <property type="evidence" value="ECO:0007669"/>
    <property type="project" value="UniProtKB-KW"/>
</dbReference>
<dbReference type="GO" id="GO:0005506">
    <property type="term" value="F:iron ion binding"/>
    <property type="evidence" value="ECO:0007669"/>
    <property type="project" value="UniProtKB-UniRule"/>
</dbReference>
<dbReference type="GO" id="GO:0008137">
    <property type="term" value="F:NADH dehydrogenase (ubiquinone) activity"/>
    <property type="evidence" value="ECO:0007669"/>
    <property type="project" value="InterPro"/>
</dbReference>
<dbReference type="GO" id="GO:0050136">
    <property type="term" value="F:NADH:ubiquinone reductase (non-electrogenic) activity"/>
    <property type="evidence" value="ECO:0007669"/>
    <property type="project" value="UniProtKB-UniRule"/>
</dbReference>
<dbReference type="GO" id="GO:0048038">
    <property type="term" value="F:quinone binding"/>
    <property type="evidence" value="ECO:0007669"/>
    <property type="project" value="UniProtKB-KW"/>
</dbReference>
<dbReference type="GO" id="GO:0009060">
    <property type="term" value="P:aerobic respiration"/>
    <property type="evidence" value="ECO:0007669"/>
    <property type="project" value="TreeGrafter"/>
</dbReference>
<dbReference type="GO" id="GO:0015990">
    <property type="term" value="P:electron transport coupled proton transport"/>
    <property type="evidence" value="ECO:0007669"/>
    <property type="project" value="TreeGrafter"/>
</dbReference>
<dbReference type="FunFam" id="3.40.50.12280:FF:000002">
    <property type="entry name" value="NADH-quinone oxidoreductase subunit B"/>
    <property type="match status" value="1"/>
</dbReference>
<dbReference type="Gene3D" id="3.40.50.12280">
    <property type="match status" value="1"/>
</dbReference>
<dbReference type="HAMAP" id="MF_01356">
    <property type="entry name" value="NDH1_NuoB"/>
    <property type="match status" value="1"/>
</dbReference>
<dbReference type="InterPro" id="IPR006137">
    <property type="entry name" value="NADH_UbQ_OxRdtase-like_20kDa"/>
</dbReference>
<dbReference type="InterPro" id="IPR006138">
    <property type="entry name" value="NADH_UQ_OxRdtase_20Kd_su"/>
</dbReference>
<dbReference type="NCBIfam" id="TIGR01957">
    <property type="entry name" value="nuoB_fam"/>
    <property type="match status" value="1"/>
</dbReference>
<dbReference type="NCBIfam" id="NF005012">
    <property type="entry name" value="PRK06411.1"/>
    <property type="match status" value="1"/>
</dbReference>
<dbReference type="PANTHER" id="PTHR11995">
    <property type="entry name" value="NADH DEHYDROGENASE"/>
    <property type="match status" value="1"/>
</dbReference>
<dbReference type="PANTHER" id="PTHR11995:SF14">
    <property type="entry name" value="NADH DEHYDROGENASE [UBIQUINONE] IRON-SULFUR PROTEIN 7, MITOCHONDRIAL"/>
    <property type="match status" value="1"/>
</dbReference>
<dbReference type="Pfam" id="PF01058">
    <property type="entry name" value="Oxidored_q6"/>
    <property type="match status" value="1"/>
</dbReference>
<dbReference type="SUPFAM" id="SSF56770">
    <property type="entry name" value="HydA/Nqo6-like"/>
    <property type="match status" value="1"/>
</dbReference>
<dbReference type="PROSITE" id="PS01150">
    <property type="entry name" value="COMPLEX1_20K"/>
    <property type="match status" value="1"/>
</dbReference>
<proteinExistence type="inferred from homology"/>
<comment type="function">
    <text evidence="1">NDH-1 shuttles electrons from NADH, via FMN and iron-sulfur (Fe-S) centers, to quinones in the respiratory chain. The immediate electron acceptor for the enzyme in this species is believed to be ubiquinone. Couples the redox reaction to proton translocation (for every two electrons transferred, four hydrogen ions are translocated across the cytoplasmic membrane), and thus conserves the redox energy in a proton gradient.</text>
</comment>
<comment type="catalytic activity">
    <reaction evidence="1">
        <text>a quinone + NADH + 5 H(+)(in) = a quinol + NAD(+) + 4 H(+)(out)</text>
        <dbReference type="Rhea" id="RHEA:57888"/>
        <dbReference type="ChEBI" id="CHEBI:15378"/>
        <dbReference type="ChEBI" id="CHEBI:24646"/>
        <dbReference type="ChEBI" id="CHEBI:57540"/>
        <dbReference type="ChEBI" id="CHEBI:57945"/>
        <dbReference type="ChEBI" id="CHEBI:132124"/>
    </reaction>
</comment>
<comment type="cofactor">
    <cofactor evidence="1">
        <name>[4Fe-4S] cluster</name>
        <dbReference type="ChEBI" id="CHEBI:49883"/>
    </cofactor>
    <text evidence="1">Binds 1 [4Fe-4S] cluster.</text>
</comment>
<comment type="subunit">
    <text evidence="1">NDH-1 is composed of 13 different subunits. Subunits NuoB, CD, E, F, and G constitute the peripheral sector of the complex.</text>
</comment>
<comment type="subcellular location">
    <subcellularLocation>
        <location evidence="1">Cell inner membrane</location>
        <topology evidence="1">Peripheral membrane protein</topology>
        <orientation evidence="1">Cytoplasmic side</orientation>
    </subcellularLocation>
</comment>
<comment type="similarity">
    <text evidence="1">Belongs to the complex I 20 kDa subunit family.</text>
</comment>
<keyword id="KW-0004">4Fe-4S</keyword>
<keyword id="KW-0997">Cell inner membrane</keyword>
<keyword id="KW-1003">Cell membrane</keyword>
<keyword id="KW-0408">Iron</keyword>
<keyword id="KW-0411">Iron-sulfur</keyword>
<keyword id="KW-0472">Membrane</keyword>
<keyword id="KW-0479">Metal-binding</keyword>
<keyword id="KW-0520">NAD</keyword>
<keyword id="KW-0874">Quinone</keyword>
<keyword id="KW-1278">Translocase</keyword>
<keyword id="KW-0813">Transport</keyword>
<keyword id="KW-0830">Ubiquinone</keyword>
<reference key="1">
    <citation type="journal article" date="2009" name="PLoS ONE">
        <title>Salmonella paratyphi C: genetic divergence from Salmonella choleraesuis and pathogenic convergence with Salmonella typhi.</title>
        <authorList>
            <person name="Liu W.-Q."/>
            <person name="Feng Y."/>
            <person name="Wang Y."/>
            <person name="Zou Q.-H."/>
            <person name="Chen F."/>
            <person name="Guo J.-T."/>
            <person name="Peng Y.-H."/>
            <person name="Jin Y."/>
            <person name="Li Y.-G."/>
            <person name="Hu S.-N."/>
            <person name="Johnston R.N."/>
            <person name="Liu G.-R."/>
            <person name="Liu S.-L."/>
        </authorList>
    </citation>
    <scope>NUCLEOTIDE SEQUENCE [LARGE SCALE GENOMIC DNA]</scope>
    <source>
        <strain>RKS4594</strain>
    </source>
</reference>
<organism>
    <name type="scientific">Salmonella paratyphi C (strain RKS4594)</name>
    <dbReference type="NCBI Taxonomy" id="476213"/>
    <lineage>
        <taxon>Bacteria</taxon>
        <taxon>Pseudomonadati</taxon>
        <taxon>Pseudomonadota</taxon>
        <taxon>Gammaproteobacteria</taxon>
        <taxon>Enterobacterales</taxon>
        <taxon>Enterobacteriaceae</taxon>
        <taxon>Salmonella</taxon>
    </lineage>
</organism>
<protein>
    <recommendedName>
        <fullName evidence="1">NADH-quinone oxidoreductase subunit B</fullName>
        <ecNumber evidence="1">7.1.1.-</ecNumber>
    </recommendedName>
    <alternativeName>
        <fullName evidence="1">NADH dehydrogenase I subunit B</fullName>
    </alternativeName>
    <alternativeName>
        <fullName evidence="1">NDH-1 subunit B</fullName>
    </alternativeName>
</protein>
<accession>C0Q040</accession>
<name>NUOB_SALPC</name>